<evidence type="ECO:0000256" key="1">
    <source>
        <dbReference type="SAM" id="MobiDB-lite"/>
    </source>
</evidence>
<evidence type="ECO:0000269" key="2">
    <source>
    </source>
</evidence>
<evidence type="ECO:0000303" key="3">
    <source>
    </source>
</evidence>
<evidence type="ECO:0000305" key="4"/>
<evidence type="ECO:0000312" key="5">
    <source>
        <dbReference type="Araport" id="AT1G28060"/>
    </source>
</evidence>
<evidence type="ECO:0000312" key="6">
    <source>
        <dbReference type="EMBL" id="AAG51492.1"/>
    </source>
</evidence>
<sequence>MDKERYSRSHRDDRDRDSSPDHSPQREGGRRRDRDVDSKRRDSDHYRSSRRGDREDERDRTKDRRGRSVERGEREGSRDREKHHHERSHEGSKEKESRSKRKDREEENGARDGKKKSRFADGNGERRSRFEDVAIEVENKDAQVSEGSGATNPTSGVTMGASTYSSIPSEASAAPSQTLLTKVSSISTTDENKASVVRSHEVPGKSSTDGRPLSTAGKSSANLPLDSSALAAKARKALQLQKGLADRLKNLPLLKKATKPTSEGSPHTRVPPSTTTPAVSTGTSFASTLPHTGLAGFGSIANIEAVKRAQELAANMGFHQDREFAPVINLFPGQAPSDMTVAQRPEKPPVLRVDALGREIDEHGNVISVTKPSNLSTLKVNINKKKKDAFQILKPQLEADLKENPYFDTRMGIDEKKILRPKRMSFQFVEEGKWTRDAENLKFKSHFGEAKAKELKVKQAQLAKANDDINPNLIEVSERVPRKEKPKEPIPDVEWWDANVLTNGEYGEITDGTITESHLKIEKLTHYIEHPRPIEPPAEAAPPPPQPLKLTKKEQKKLRTQRRLAKEKEKQEMIRQGLLEPPKAKVKMSNLMKVLGSEATQDPTKLEKEIRTAAAEREQAHTDRNAARKLTPAEKREKKERKLFDDPTTVETIVSVYKIKKLSHPKTRFKVEMNARENRLTGCSVMTDEMSVVVVEGKSKAIKRYGKLMMKRINWEEAERKEGNEDEEEEVNGGNKCWLVWQGSIGKPSFHRFHVHECVTESTAKKVFMDAGVVHYWDLAVNYSDD</sequence>
<reference key="1">
    <citation type="journal article" date="2000" name="Nature">
        <title>Sequence and analysis of chromosome 1 of the plant Arabidopsis thaliana.</title>
        <authorList>
            <person name="Theologis A."/>
            <person name="Ecker J.R."/>
            <person name="Palm C.J."/>
            <person name="Federspiel N.A."/>
            <person name="Kaul S."/>
            <person name="White O."/>
            <person name="Alonso J."/>
            <person name="Altafi H."/>
            <person name="Araujo R."/>
            <person name="Bowman C.L."/>
            <person name="Brooks S.Y."/>
            <person name="Buehler E."/>
            <person name="Chan A."/>
            <person name="Chao Q."/>
            <person name="Chen H."/>
            <person name="Cheuk R.F."/>
            <person name="Chin C.W."/>
            <person name="Chung M.K."/>
            <person name="Conn L."/>
            <person name="Conway A.B."/>
            <person name="Conway A.R."/>
            <person name="Creasy T.H."/>
            <person name="Dewar K."/>
            <person name="Dunn P."/>
            <person name="Etgu P."/>
            <person name="Feldblyum T.V."/>
            <person name="Feng J.-D."/>
            <person name="Fong B."/>
            <person name="Fujii C.Y."/>
            <person name="Gill J.E."/>
            <person name="Goldsmith A.D."/>
            <person name="Haas B."/>
            <person name="Hansen N.F."/>
            <person name="Hughes B."/>
            <person name="Huizar L."/>
            <person name="Hunter J.L."/>
            <person name="Jenkins J."/>
            <person name="Johnson-Hopson C."/>
            <person name="Khan S."/>
            <person name="Khaykin E."/>
            <person name="Kim C.J."/>
            <person name="Koo H.L."/>
            <person name="Kremenetskaia I."/>
            <person name="Kurtz D.B."/>
            <person name="Kwan A."/>
            <person name="Lam B."/>
            <person name="Langin-Hooper S."/>
            <person name="Lee A."/>
            <person name="Lee J.M."/>
            <person name="Lenz C.A."/>
            <person name="Li J.H."/>
            <person name="Li Y.-P."/>
            <person name="Lin X."/>
            <person name="Liu S.X."/>
            <person name="Liu Z.A."/>
            <person name="Luros J.S."/>
            <person name="Maiti R."/>
            <person name="Marziali A."/>
            <person name="Militscher J."/>
            <person name="Miranda M."/>
            <person name="Nguyen M."/>
            <person name="Nierman W.C."/>
            <person name="Osborne B.I."/>
            <person name="Pai G."/>
            <person name="Peterson J."/>
            <person name="Pham P.K."/>
            <person name="Rizzo M."/>
            <person name="Rooney T."/>
            <person name="Rowley D."/>
            <person name="Sakano H."/>
            <person name="Salzberg S.L."/>
            <person name="Schwartz J.R."/>
            <person name="Shinn P."/>
            <person name="Southwick A.M."/>
            <person name="Sun H."/>
            <person name="Tallon L.J."/>
            <person name="Tambunga G."/>
            <person name="Toriumi M.J."/>
            <person name="Town C.D."/>
            <person name="Utterback T."/>
            <person name="Van Aken S."/>
            <person name="Vaysberg M."/>
            <person name="Vysotskaia V.S."/>
            <person name="Walker M."/>
            <person name="Wu D."/>
            <person name="Yu G."/>
            <person name="Fraser C.M."/>
            <person name="Venter J.C."/>
            <person name="Davis R.W."/>
        </authorList>
    </citation>
    <scope>NUCLEOTIDE SEQUENCE [LARGE SCALE GENOMIC DNA]</scope>
    <source>
        <strain>cv. Columbia</strain>
    </source>
</reference>
<reference key="2">
    <citation type="journal article" date="2017" name="Plant J.">
        <title>Araport11: a complete reannotation of the Arabidopsis thaliana reference genome.</title>
        <authorList>
            <person name="Cheng C.Y."/>
            <person name="Krishnakumar V."/>
            <person name="Chan A.P."/>
            <person name="Thibaud-Nissen F."/>
            <person name="Schobel S."/>
            <person name="Town C.D."/>
        </authorList>
    </citation>
    <scope>GENOME REANNOTATION</scope>
    <source>
        <strain>cv. Columbia</strain>
    </source>
</reference>
<reference key="3">
    <citation type="journal article" date="2003" name="Science">
        <title>Empirical analysis of transcriptional activity in the Arabidopsis genome.</title>
        <authorList>
            <person name="Yamada K."/>
            <person name="Lim J."/>
            <person name="Dale J.M."/>
            <person name="Chen H."/>
            <person name="Shinn P."/>
            <person name="Palm C.J."/>
            <person name="Southwick A.M."/>
            <person name="Wu H.C."/>
            <person name="Kim C.J."/>
            <person name="Nguyen M."/>
            <person name="Pham P.K."/>
            <person name="Cheuk R.F."/>
            <person name="Karlin-Newmann G."/>
            <person name="Liu S.X."/>
            <person name="Lam B."/>
            <person name="Sakano H."/>
            <person name="Wu T."/>
            <person name="Yu G."/>
            <person name="Miranda M."/>
            <person name="Quach H.L."/>
            <person name="Tripp M."/>
            <person name="Chang C.H."/>
            <person name="Lee J.M."/>
            <person name="Toriumi M.J."/>
            <person name="Chan M.M."/>
            <person name="Tang C.C."/>
            <person name="Onodera C.S."/>
            <person name="Deng J.M."/>
            <person name="Akiyama K."/>
            <person name="Ansari Y."/>
            <person name="Arakawa T."/>
            <person name="Banh J."/>
            <person name="Banno F."/>
            <person name="Bowser L."/>
            <person name="Brooks S.Y."/>
            <person name="Carninci P."/>
            <person name="Chao Q."/>
            <person name="Choy N."/>
            <person name="Enju A."/>
            <person name="Goldsmith A.D."/>
            <person name="Gurjal M."/>
            <person name="Hansen N.F."/>
            <person name="Hayashizaki Y."/>
            <person name="Johnson-Hopson C."/>
            <person name="Hsuan V.W."/>
            <person name="Iida K."/>
            <person name="Karnes M."/>
            <person name="Khan S."/>
            <person name="Koesema E."/>
            <person name="Ishida J."/>
            <person name="Jiang P.X."/>
            <person name="Jones T."/>
            <person name="Kawai J."/>
            <person name="Kamiya A."/>
            <person name="Meyers C."/>
            <person name="Nakajima M."/>
            <person name="Narusaka M."/>
            <person name="Seki M."/>
            <person name="Sakurai T."/>
            <person name="Satou M."/>
            <person name="Tamse R."/>
            <person name="Vaysberg M."/>
            <person name="Wallender E.K."/>
            <person name="Wong C."/>
            <person name="Yamamura Y."/>
            <person name="Yuan S."/>
            <person name="Shinozaki K."/>
            <person name="Davis R.W."/>
            <person name="Theologis A."/>
            <person name="Ecker J.R."/>
        </authorList>
    </citation>
    <scope>NUCLEOTIDE SEQUENCE [LARGE SCALE MRNA]</scope>
    <source>
        <strain>cv. Columbia</strain>
    </source>
</reference>
<reference key="4">
    <citation type="journal article" date="2013" name="PLoS Genet.">
        <title>A Pre-mRNA-splicing factor is required for RNA-directed DNA methylation in Arabidopsis.</title>
        <authorList>
            <person name="Huang C.F."/>
            <person name="Miki D."/>
            <person name="Tang K."/>
            <person name="Zhou H.R."/>
            <person name="Zheng Z."/>
            <person name="Chen W."/>
            <person name="Ma Z.Y."/>
            <person name="Yang L."/>
            <person name="Zhang H."/>
            <person name="Liu R."/>
            <person name="He X.J."/>
            <person name="Zhu J.K."/>
        </authorList>
    </citation>
    <scope>FUNCTION</scope>
    <scope>SUBCELLULAR LOCATION</scope>
    <scope>DISRUPTION PHENOTYPE</scope>
</reference>
<dbReference type="EMBL" id="AC069471">
    <property type="protein sequence ID" value="AAG51492.1"/>
    <property type="molecule type" value="Genomic_DNA"/>
</dbReference>
<dbReference type="EMBL" id="CP002684">
    <property type="protein sequence ID" value="AEE30907.1"/>
    <property type="molecule type" value="Genomic_DNA"/>
</dbReference>
<dbReference type="EMBL" id="CP002684">
    <property type="protein sequence ID" value="ANM58978.1"/>
    <property type="molecule type" value="Genomic_DNA"/>
</dbReference>
<dbReference type="EMBL" id="CP002684">
    <property type="protein sequence ID" value="ANM58979.1"/>
    <property type="molecule type" value="Genomic_DNA"/>
</dbReference>
<dbReference type="EMBL" id="AY126993">
    <property type="protein sequence ID" value="AAM83220.1"/>
    <property type="molecule type" value="mRNA"/>
</dbReference>
<dbReference type="EMBL" id="BT002294">
    <property type="protein sequence ID" value="AAN72305.1"/>
    <property type="molecule type" value="mRNA"/>
</dbReference>
<dbReference type="PIR" id="C86406">
    <property type="entry name" value="C86406"/>
</dbReference>
<dbReference type="RefSeq" id="NP_001319094.1">
    <property type="nucleotide sequence ID" value="NM_001332796.1"/>
</dbReference>
<dbReference type="RefSeq" id="NP_001321377.1">
    <property type="nucleotide sequence ID" value="NM_001332797.1"/>
</dbReference>
<dbReference type="RefSeq" id="NP_174127.1">
    <property type="nucleotide sequence ID" value="NM_102571.3"/>
</dbReference>
<dbReference type="SMR" id="Q9C7E7"/>
<dbReference type="FunCoup" id="Q9C7E7">
    <property type="interactions" value="4189"/>
</dbReference>
<dbReference type="STRING" id="3702.Q9C7E7"/>
<dbReference type="iPTMnet" id="Q9C7E7"/>
<dbReference type="PaxDb" id="3702-AT1G28060.1"/>
<dbReference type="ProteomicsDB" id="235053"/>
<dbReference type="EnsemblPlants" id="AT1G28060.1">
    <property type="protein sequence ID" value="AT1G28060.1"/>
    <property type="gene ID" value="AT1G28060"/>
</dbReference>
<dbReference type="EnsemblPlants" id="AT1G28060.2">
    <property type="protein sequence ID" value="AT1G28060.2"/>
    <property type="gene ID" value="AT1G28060"/>
</dbReference>
<dbReference type="EnsemblPlants" id="AT1G28060.3">
    <property type="protein sequence ID" value="AT1G28060.3"/>
    <property type="gene ID" value="AT1G28060"/>
</dbReference>
<dbReference type="GeneID" id="839699"/>
<dbReference type="Gramene" id="AT1G28060.1">
    <property type="protein sequence ID" value="AT1G28060.1"/>
    <property type="gene ID" value="AT1G28060"/>
</dbReference>
<dbReference type="Gramene" id="AT1G28060.2">
    <property type="protein sequence ID" value="AT1G28060.2"/>
    <property type="gene ID" value="AT1G28060"/>
</dbReference>
<dbReference type="Gramene" id="AT1G28060.3">
    <property type="protein sequence ID" value="AT1G28060.3"/>
    <property type="gene ID" value="AT1G28060"/>
</dbReference>
<dbReference type="KEGG" id="ath:AT1G28060"/>
<dbReference type="Araport" id="AT1G28060"/>
<dbReference type="TAIR" id="AT1G28060">
    <property type="gene designation" value="RDM16"/>
</dbReference>
<dbReference type="eggNOG" id="KOG2769">
    <property type="taxonomic scope" value="Eukaryota"/>
</dbReference>
<dbReference type="HOGENOM" id="CLU_015750_1_0_1"/>
<dbReference type="InParanoid" id="Q9C7E7"/>
<dbReference type="OMA" id="HASASFE"/>
<dbReference type="OrthoDB" id="10264544at2759"/>
<dbReference type="PhylomeDB" id="Q9C7E7"/>
<dbReference type="CD-CODE" id="4299E36E">
    <property type="entry name" value="Nucleolus"/>
</dbReference>
<dbReference type="PRO" id="PR:Q9C7E7"/>
<dbReference type="Proteomes" id="UP000006548">
    <property type="component" value="Chromosome 1"/>
</dbReference>
<dbReference type="ExpressionAtlas" id="Q9C7E7">
    <property type="expression patterns" value="baseline and differential"/>
</dbReference>
<dbReference type="GO" id="GO:0005654">
    <property type="term" value="C:nucleoplasm"/>
    <property type="evidence" value="ECO:0000314"/>
    <property type="project" value="UniProtKB"/>
</dbReference>
<dbReference type="GO" id="GO:0046540">
    <property type="term" value="C:U4/U6 x U5 tri-snRNP complex"/>
    <property type="evidence" value="ECO:0007669"/>
    <property type="project" value="InterPro"/>
</dbReference>
<dbReference type="GO" id="GO:0009793">
    <property type="term" value="P:embryo development ending in seed dormancy"/>
    <property type="evidence" value="ECO:0000315"/>
    <property type="project" value="UniProtKB"/>
</dbReference>
<dbReference type="GO" id="GO:0080188">
    <property type="term" value="P:gene silencing by siRNA-directed DNA methylation"/>
    <property type="evidence" value="ECO:0000315"/>
    <property type="project" value="UniProtKB"/>
</dbReference>
<dbReference type="GO" id="GO:0000398">
    <property type="term" value="P:mRNA splicing, via spliceosome"/>
    <property type="evidence" value="ECO:0000315"/>
    <property type="project" value="UniProtKB"/>
</dbReference>
<dbReference type="CDD" id="cd24162">
    <property type="entry name" value="Prp3_C"/>
    <property type="match status" value="1"/>
</dbReference>
<dbReference type="InterPro" id="IPR013881">
    <property type="entry name" value="Pre-mRNA_splic_Prp3_dom"/>
</dbReference>
<dbReference type="InterPro" id="IPR027104">
    <property type="entry name" value="Prp3"/>
</dbReference>
<dbReference type="InterPro" id="IPR010541">
    <property type="entry name" value="Prp3_C"/>
</dbReference>
<dbReference type="PANTHER" id="PTHR14212">
    <property type="entry name" value="U4/U6-ASSOCIATED RNA SPLICING FACTOR-RELATED"/>
    <property type="match status" value="1"/>
</dbReference>
<dbReference type="PANTHER" id="PTHR14212:SF0">
    <property type="entry name" value="U4_U6 SMALL NUCLEAR RIBONUCLEOPROTEIN PRP3"/>
    <property type="match status" value="1"/>
</dbReference>
<dbReference type="Pfam" id="PF08572">
    <property type="entry name" value="PRP3"/>
    <property type="match status" value="1"/>
</dbReference>
<dbReference type="Pfam" id="PF06544">
    <property type="entry name" value="Prp3_C"/>
    <property type="match status" value="1"/>
</dbReference>
<comment type="function">
    <text evidence="2">Functions in the RNA-directed DNA methylation (RdDM) pathway. Acts as a pre-mRNA splicing factor, likely by affecting Pol V transcripts. Affects DNA methylation of transposable elements (TEs) and preferentially influences NRPD1- and ROS1-targeted loci.</text>
</comment>
<comment type="subcellular location">
    <subcellularLocation>
        <location evidence="2">Nucleus</location>
        <location evidence="2">Nucleoplasm</location>
    </subcellularLocation>
</comment>
<comment type="disruption phenotype">
    <text evidence="2">Embryonic lethality when homozygous.</text>
</comment>
<organism>
    <name type="scientific">Arabidopsis thaliana</name>
    <name type="common">Mouse-ear cress</name>
    <dbReference type="NCBI Taxonomy" id="3702"/>
    <lineage>
        <taxon>Eukaryota</taxon>
        <taxon>Viridiplantae</taxon>
        <taxon>Streptophyta</taxon>
        <taxon>Embryophyta</taxon>
        <taxon>Tracheophyta</taxon>
        <taxon>Spermatophyta</taxon>
        <taxon>Magnoliopsida</taxon>
        <taxon>eudicotyledons</taxon>
        <taxon>Gunneridae</taxon>
        <taxon>Pentapetalae</taxon>
        <taxon>rosids</taxon>
        <taxon>malvids</taxon>
        <taxon>Brassicales</taxon>
        <taxon>Brassicaceae</taxon>
        <taxon>Camelineae</taxon>
        <taxon>Arabidopsis</taxon>
    </lineage>
</organism>
<accession>Q9C7E7</accession>
<accession>Q8H0S1</accession>
<feature type="chain" id="PRO_0000438694" description="Protein RDM16">
    <location>
        <begin position="1"/>
        <end position="786"/>
    </location>
</feature>
<feature type="region of interest" description="Disordered" evidence="1">
    <location>
        <begin position="1"/>
        <end position="223"/>
    </location>
</feature>
<feature type="region of interest" description="Disordered" evidence="1">
    <location>
        <begin position="255"/>
        <end position="283"/>
    </location>
</feature>
<feature type="region of interest" description="Disordered" evidence="1">
    <location>
        <begin position="532"/>
        <end position="557"/>
    </location>
</feature>
<feature type="region of interest" description="Disordered" evidence="1">
    <location>
        <begin position="616"/>
        <end position="642"/>
    </location>
</feature>
<feature type="compositionally biased region" description="Basic and acidic residues" evidence="1">
    <location>
        <begin position="1"/>
        <end position="80"/>
    </location>
</feature>
<feature type="compositionally biased region" description="Basic and acidic residues" evidence="1">
    <location>
        <begin position="87"/>
        <end position="112"/>
    </location>
</feature>
<feature type="compositionally biased region" description="Basic and acidic residues" evidence="1">
    <location>
        <begin position="123"/>
        <end position="143"/>
    </location>
</feature>
<feature type="compositionally biased region" description="Polar residues" evidence="1">
    <location>
        <begin position="145"/>
        <end position="164"/>
    </location>
</feature>
<feature type="compositionally biased region" description="Low complexity" evidence="1">
    <location>
        <begin position="165"/>
        <end position="176"/>
    </location>
</feature>
<feature type="compositionally biased region" description="Polar residues" evidence="1">
    <location>
        <begin position="177"/>
        <end position="189"/>
    </location>
</feature>
<feature type="compositionally biased region" description="Basic and acidic residues" evidence="1">
    <location>
        <begin position="190"/>
        <end position="203"/>
    </location>
</feature>
<feature type="compositionally biased region" description="Low complexity" evidence="1">
    <location>
        <begin position="268"/>
        <end position="283"/>
    </location>
</feature>
<feature type="compositionally biased region" description="Pro residues" evidence="1">
    <location>
        <begin position="534"/>
        <end position="547"/>
    </location>
</feature>
<feature type="sequence conflict" description="In Ref. 3; AAN72305." evidence="4" ref="3">
    <original>Q</original>
    <variation>P</variation>
    <location>
        <position position="461"/>
    </location>
</feature>
<protein>
    <recommendedName>
        <fullName evidence="3">Protein RDM16</fullName>
    </recommendedName>
    <alternativeName>
        <fullName evidence="4">Pre-mRNA-splicing factor RDM16</fullName>
    </alternativeName>
    <alternativeName>
        <fullName evidence="3">Protein RNA-directed DNA methylation 16</fullName>
    </alternativeName>
</protein>
<name>RDM16_ARATH</name>
<gene>
    <name evidence="3" type="primary">RDM16</name>
    <name evidence="5" type="ordered locus">At1g28060</name>
    <name evidence="6" type="ORF">F13K9.16</name>
</gene>
<keyword id="KW-0507">mRNA processing</keyword>
<keyword id="KW-0508">mRNA splicing</keyword>
<keyword id="KW-0539">Nucleus</keyword>
<keyword id="KW-1185">Reference proteome</keyword>
<proteinExistence type="evidence at transcript level"/>